<proteinExistence type="inferred from homology"/>
<accession>Q6LYS1</accession>
<reference key="1">
    <citation type="journal article" date="2004" name="J. Bacteriol.">
        <title>Complete genome sequence of the genetically tractable hydrogenotrophic methanogen Methanococcus maripaludis.</title>
        <authorList>
            <person name="Hendrickson E.L."/>
            <person name="Kaul R."/>
            <person name="Zhou Y."/>
            <person name="Bovee D."/>
            <person name="Chapman P."/>
            <person name="Chung J."/>
            <person name="Conway de Macario E."/>
            <person name="Dodsworth J.A."/>
            <person name="Gillett W."/>
            <person name="Graham D.E."/>
            <person name="Hackett M."/>
            <person name="Haydock A.K."/>
            <person name="Kang A."/>
            <person name="Land M.L."/>
            <person name="Levy R."/>
            <person name="Lie T.J."/>
            <person name="Major T.A."/>
            <person name="Moore B.C."/>
            <person name="Porat I."/>
            <person name="Palmeiri A."/>
            <person name="Rouse G."/>
            <person name="Saenphimmachak C."/>
            <person name="Soell D."/>
            <person name="Van Dien S."/>
            <person name="Wang T."/>
            <person name="Whitman W.B."/>
            <person name="Xia Q."/>
            <person name="Zhang Y."/>
            <person name="Larimer F.W."/>
            <person name="Olson M.V."/>
            <person name="Leigh J.A."/>
        </authorList>
    </citation>
    <scope>NUCLEOTIDE SEQUENCE [LARGE SCALE GENOMIC DNA]</scope>
    <source>
        <strain>DSM 14266 / JCM 13030 / NBRC 101832 / S2 / LL</strain>
    </source>
</reference>
<comment type="function">
    <text evidence="1">Catalyzes the stereoinversion of LL-2,6-diaminopimelate (L,L-DAP) to meso-diaminopimelate (meso-DAP), a precursor of L-lysine.</text>
</comment>
<comment type="catalytic activity">
    <reaction evidence="1">
        <text>(2S,6S)-2,6-diaminopimelate = meso-2,6-diaminopimelate</text>
        <dbReference type="Rhea" id="RHEA:15393"/>
        <dbReference type="ChEBI" id="CHEBI:57609"/>
        <dbReference type="ChEBI" id="CHEBI:57791"/>
        <dbReference type="EC" id="5.1.1.7"/>
    </reaction>
</comment>
<comment type="pathway">
    <text evidence="1">Amino-acid biosynthesis; L-lysine biosynthesis via DAP pathway; DL-2,6-diaminopimelate from LL-2,6-diaminopimelate: step 1/1.</text>
</comment>
<comment type="subunit">
    <text evidence="1">Homodimer.</text>
</comment>
<comment type="subcellular location">
    <subcellularLocation>
        <location evidence="1">Cytoplasm</location>
    </subcellularLocation>
</comment>
<comment type="similarity">
    <text evidence="1">Belongs to the diaminopimelate epimerase family.</text>
</comment>
<name>DAPF_METMP</name>
<organism>
    <name type="scientific">Methanococcus maripaludis (strain DSM 14266 / JCM 13030 / NBRC 101832 / S2 / LL)</name>
    <dbReference type="NCBI Taxonomy" id="267377"/>
    <lineage>
        <taxon>Archaea</taxon>
        <taxon>Methanobacteriati</taxon>
        <taxon>Methanobacteriota</taxon>
        <taxon>Methanomada group</taxon>
        <taxon>Methanococci</taxon>
        <taxon>Methanococcales</taxon>
        <taxon>Methanococcaceae</taxon>
        <taxon>Methanococcus</taxon>
    </lineage>
</organism>
<feature type="chain" id="PRO_1000124424" description="Diaminopimelate epimerase">
    <location>
        <begin position="1"/>
        <end position="277"/>
    </location>
</feature>
<feature type="active site" description="Proton donor" evidence="1">
    <location>
        <position position="71"/>
    </location>
</feature>
<feature type="active site" description="Proton acceptor" evidence="1">
    <location>
        <position position="220"/>
    </location>
</feature>
<feature type="binding site" evidence="1">
    <location>
        <position position="11"/>
    </location>
    <ligand>
        <name>substrate</name>
    </ligand>
</feature>
<feature type="binding site" evidence="1">
    <location>
        <position position="62"/>
    </location>
    <ligand>
        <name>substrate</name>
    </ligand>
</feature>
<feature type="binding site" evidence="1">
    <location>
        <begin position="72"/>
        <end position="73"/>
    </location>
    <ligand>
        <name>substrate</name>
    </ligand>
</feature>
<feature type="binding site" evidence="1">
    <location>
        <position position="160"/>
    </location>
    <ligand>
        <name>substrate</name>
    </ligand>
</feature>
<feature type="binding site" evidence="1">
    <location>
        <position position="193"/>
    </location>
    <ligand>
        <name>substrate</name>
    </ligand>
</feature>
<feature type="binding site" evidence="1">
    <location>
        <begin position="211"/>
        <end position="212"/>
    </location>
    <ligand>
        <name>substrate</name>
    </ligand>
</feature>
<feature type="binding site" evidence="1">
    <location>
        <begin position="221"/>
        <end position="222"/>
    </location>
    <ligand>
        <name>substrate</name>
    </ligand>
</feature>
<feature type="site" description="Could be important to modulate the pK values of the two catalytic cysteine residues" evidence="1">
    <location>
        <position position="162"/>
    </location>
</feature>
<feature type="site" description="Could be important to modulate the pK values of the two catalytic cysteine residues" evidence="1">
    <location>
        <position position="211"/>
    </location>
</feature>
<gene>
    <name evidence="1" type="primary">dapF</name>
    <name type="ordered locus">MMP0917</name>
</gene>
<keyword id="KW-0028">Amino-acid biosynthesis</keyword>
<keyword id="KW-0963">Cytoplasm</keyword>
<keyword id="KW-0413">Isomerase</keyword>
<keyword id="KW-0457">Lysine biosynthesis</keyword>
<keyword id="KW-1185">Reference proteome</keyword>
<evidence type="ECO:0000255" key="1">
    <source>
        <dbReference type="HAMAP-Rule" id="MF_00197"/>
    </source>
</evidence>
<dbReference type="EC" id="5.1.1.7" evidence="1"/>
<dbReference type="EMBL" id="BX950229">
    <property type="protein sequence ID" value="CAF30473.1"/>
    <property type="molecule type" value="Genomic_DNA"/>
</dbReference>
<dbReference type="RefSeq" id="WP_011170861.1">
    <property type="nucleotide sequence ID" value="NC_005791.1"/>
</dbReference>
<dbReference type="SMR" id="Q6LYS1"/>
<dbReference type="STRING" id="267377.MMP0917"/>
<dbReference type="EnsemblBacteria" id="CAF30473">
    <property type="protein sequence ID" value="CAF30473"/>
    <property type="gene ID" value="MMP0917"/>
</dbReference>
<dbReference type="GeneID" id="2761669"/>
<dbReference type="KEGG" id="mmp:MMP0917"/>
<dbReference type="PATRIC" id="fig|267377.15.peg.945"/>
<dbReference type="eggNOG" id="arCOG02255">
    <property type="taxonomic scope" value="Archaea"/>
</dbReference>
<dbReference type="HOGENOM" id="CLU_053306_3_0_2"/>
<dbReference type="OrthoDB" id="358699at2157"/>
<dbReference type="UniPathway" id="UPA00034">
    <property type="reaction ID" value="UER00025"/>
</dbReference>
<dbReference type="Proteomes" id="UP000000590">
    <property type="component" value="Chromosome"/>
</dbReference>
<dbReference type="GO" id="GO:0005829">
    <property type="term" value="C:cytosol"/>
    <property type="evidence" value="ECO:0007669"/>
    <property type="project" value="TreeGrafter"/>
</dbReference>
<dbReference type="GO" id="GO:0008837">
    <property type="term" value="F:diaminopimelate epimerase activity"/>
    <property type="evidence" value="ECO:0007669"/>
    <property type="project" value="UniProtKB-UniRule"/>
</dbReference>
<dbReference type="GO" id="GO:0009089">
    <property type="term" value="P:lysine biosynthetic process via diaminopimelate"/>
    <property type="evidence" value="ECO:0007669"/>
    <property type="project" value="UniProtKB-UniRule"/>
</dbReference>
<dbReference type="FunFam" id="3.10.310.10:FF:000001">
    <property type="entry name" value="Diaminopimelate epimerase"/>
    <property type="match status" value="1"/>
</dbReference>
<dbReference type="FunFam" id="3.10.310.10:FF:000004">
    <property type="entry name" value="Diaminopimelate epimerase"/>
    <property type="match status" value="1"/>
</dbReference>
<dbReference type="Gene3D" id="3.10.310.10">
    <property type="entry name" value="Diaminopimelate Epimerase, Chain A, domain 1"/>
    <property type="match status" value="2"/>
</dbReference>
<dbReference type="HAMAP" id="MF_00197">
    <property type="entry name" value="DAP_epimerase"/>
    <property type="match status" value="1"/>
</dbReference>
<dbReference type="InterPro" id="IPR018510">
    <property type="entry name" value="DAP_epimerase_AS"/>
</dbReference>
<dbReference type="InterPro" id="IPR001653">
    <property type="entry name" value="DAP_epimerase_DapF"/>
</dbReference>
<dbReference type="NCBIfam" id="TIGR00652">
    <property type="entry name" value="DapF"/>
    <property type="match status" value="1"/>
</dbReference>
<dbReference type="PANTHER" id="PTHR31689:SF0">
    <property type="entry name" value="DIAMINOPIMELATE EPIMERASE"/>
    <property type="match status" value="1"/>
</dbReference>
<dbReference type="PANTHER" id="PTHR31689">
    <property type="entry name" value="DIAMINOPIMELATE EPIMERASE, CHLOROPLASTIC"/>
    <property type="match status" value="1"/>
</dbReference>
<dbReference type="Pfam" id="PF01678">
    <property type="entry name" value="DAP_epimerase"/>
    <property type="match status" value="2"/>
</dbReference>
<dbReference type="SUPFAM" id="SSF54506">
    <property type="entry name" value="Diaminopimelate epimerase-like"/>
    <property type="match status" value="1"/>
</dbReference>
<dbReference type="PROSITE" id="PS01326">
    <property type="entry name" value="DAP_EPIMERASE"/>
    <property type="match status" value="1"/>
</dbReference>
<sequence>MKFTKMHGLGNDYIYVDAISQKIENPNEISKFVSDRHFGIGSDGLVLILPSDVADFKMRMFNSDGSEAEMCGNAIRCVGKFVYDKKMTDKSTITIETLAGIKVLEMTIENGKVVLVKVDMGEPILKAEEIPVLSEKHPVIDEEITAKDYCYNFTCVSMGNPHAITYIENVDEFPLEKIGPLFEIHEKFPRKTNVEFVELIDKNTVKMRVWERGAGETLACGTGACAVLTASVLKGYVGRKATVKLLGGDLTIEWNEFDKHIYMTGPATTVFEGEIDI</sequence>
<protein>
    <recommendedName>
        <fullName evidence="1">Diaminopimelate epimerase</fullName>
        <shortName evidence="1">DAP epimerase</shortName>
        <ecNumber evidence="1">5.1.1.7</ecNumber>
    </recommendedName>
    <alternativeName>
        <fullName evidence="1">PLP-independent amino acid racemase</fullName>
    </alternativeName>
</protein>